<protein>
    <recommendedName>
        <fullName evidence="1">Phosphopantetheine adenylyltransferase</fullName>
        <ecNumber evidence="1">2.7.7.3</ecNumber>
    </recommendedName>
    <alternativeName>
        <fullName evidence="1">Dephospho-CoA pyrophosphorylase</fullName>
    </alternativeName>
    <alternativeName>
        <fullName evidence="1">Pantetheine-phosphate adenylyltransferase</fullName>
        <shortName evidence="1">PPAT</shortName>
    </alternativeName>
</protein>
<comment type="function">
    <text evidence="1">Reversibly transfers an adenylyl group from ATP to 4'-phosphopantetheine, yielding dephospho-CoA (dPCoA) and pyrophosphate.</text>
</comment>
<comment type="catalytic activity">
    <reaction evidence="1">
        <text>(R)-4'-phosphopantetheine + ATP + H(+) = 3'-dephospho-CoA + diphosphate</text>
        <dbReference type="Rhea" id="RHEA:19801"/>
        <dbReference type="ChEBI" id="CHEBI:15378"/>
        <dbReference type="ChEBI" id="CHEBI:30616"/>
        <dbReference type="ChEBI" id="CHEBI:33019"/>
        <dbReference type="ChEBI" id="CHEBI:57328"/>
        <dbReference type="ChEBI" id="CHEBI:61723"/>
        <dbReference type="EC" id="2.7.7.3"/>
    </reaction>
</comment>
<comment type="cofactor">
    <cofactor evidence="1">
        <name>Mg(2+)</name>
        <dbReference type="ChEBI" id="CHEBI:18420"/>
    </cofactor>
</comment>
<comment type="pathway">
    <text evidence="1">Cofactor biosynthesis; coenzyme A biosynthesis; CoA from (R)-pantothenate: step 4/5.</text>
</comment>
<comment type="subunit">
    <text evidence="1">Homohexamer.</text>
</comment>
<comment type="subcellular location">
    <subcellularLocation>
        <location evidence="1">Cytoplasm</location>
    </subcellularLocation>
</comment>
<comment type="similarity">
    <text evidence="1">Belongs to the bacterial CoaD family.</text>
</comment>
<feature type="chain" id="PRO_1000058156" description="Phosphopantetheine adenylyltransferase">
    <location>
        <begin position="1"/>
        <end position="163"/>
    </location>
</feature>
<feature type="binding site" evidence="1">
    <location>
        <begin position="11"/>
        <end position="12"/>
    </location>
    <ligand>
        <name>ATP</name>
        <dbReference type="ChEBI" id="CHEBI:30616"/>
    </ligand>
</feature>
<feature type="binding site" evidence="1">
    <location>
        <position position="11"/>
    </location>
    <ligand>
        <name>substrate</name>
    </ligand>
</feature>
<feature type="binding site" evidence="1">
    <location>
        <position position="19"/>
    </location>
    <ligand>
        <name>ATP</name>
        <dbReference type="ChEBI" id="CHEBI:30616"/>
    </ligand>
</feature>
<feature type="binding site" evidence="1">
    <location>
        <position position="43"/>
    </location>
    <ligand>
        <name>substrate</name>
    </ligand>
</feature>
<feature type="binding site" evidence="1">
    <location>
        <position position="75"/>
    </location>
    <ligand>
        <name>substrate</name>
    </ligand>
</feature>
<feature type="binding site" evidence="1">
    <location>
        <position position="89"/>
    </location>
    <ligand>
        <name>substrate</name>
    </ligand>
</feature>
<feature type="binding site" evidence="1">
    <location>
        <begin position="90"/>
        <end position="92"/>
    </location>
    <ligand>
        <name>ATP</name>
        <dbReference type="ChEBI" id="CHEBI:30616"/>
    </ligand>
</feature>
<feature type="binding site" evidence="1">
    <location>
        <position position="100"/>
    </location>
    <ligand>
        <name>ATP</name>
        <dbReference type="ChEBI" id="CHEBI:30616"/>
    </ligand>
</feature>
<feature type="binding site" evidence="1">
    <location>
        <begin position="125"/>
        <end position="131"/>
    </location>
    <ligand>
        <name>ATP</name>
        <dbReference type="ChEBI" id="CHEBI:30616"/>
    </ligand>
</feature>
<feature type="site" description="Transition state stabilizer" evidence="1">
    <location>
        <position position="19"/>
    </location>
</feature>
<organism>
    <name type="scientific">Azoarcus sp. (strain BH72)</name>
    <dbReference type="NCBI Taxonomy" id="418699"/>
    <lineage>
        <taxon>Bacteria</taxon>
        <taxon>Pseudomonadati</taxon>
        <taxon>Pseudomonadota</taxon>
        <taxon>Betaproteobacteria</taxon>
        <taxon>Rhodocyclales</taxon>
        <taxon>Zoogloeaceae</taxon>
        <taxon>Azoarcus</taxon>
    </lineage>
</organism>
<name>COAD_AZOSB</name>
<sequence>MRDGVAIYPGTFDPFTRGHEDLVRRASLLFDQVVVGVAESRGKAPIFTLEERVEIAREVVKPFPNVRVAGFDGLLMDFLRAQNGRVILRGLRAVSDFEYEFQMAGMNRKLFPDVETVFLTPAEEYMFISATMVREIARLGGDVSKFVQPSVLTQLQQKVSSKR</sequence>
<evidence type="ECO:0000255" key="1">
    <source>
        <dbReference type="HAMAP-Rule" id="MF_00151"/>
    </source>
</evidence>
<dbReference type="EC" id="2.7.7.3" evidence="1"/>
<dbReference type="EMBL" id="AM406670">
    <property type="protein sequence ID" value="CAL93379.1"/>
    <property type="molecule type" value="Genomic_DNA"/>
</dbReference>
<dbReference type="RefSeq" id="WP_011764496.1">
    <property type="nucleotide sequence ID" value="NC_008702.1"/>
</dbReference>
<dbReference type="SMR" id="A1K3H4"/>
<dbReference type="STRING" id="62928.azo0762"/>
<dbReference type="KEGG" id="aoa:dqs_0837"/>
<dbReference type="KEGG" id="azo:azo0762"/>
<dbReference type="eggNOG" id="COG0669">
    <property type="taxonomic scope" value="Bacteria"/>
</dbReference>
<dbReference type="HOGENOM" id="CLU_100149_0_1_4"/>
<dbReference type="OrthoDB" id="9806661at2"/>
<dbReference type="UniPathway" id="UPA00241">
    <property type="reaction ID" value="UER00355"/>
</dbReference>
<dbReference type="Proteomes" id="UP000002588">
    <property type="component" value="Chromosome"/>
</dbReference>
<dbReference type="GO" id="GO:0005737">
    <property type="term" value="C:cytoplasm"/>
    <property type="evidence" value="ECO:0007669"/>
    <property type="project" value="UniProtKB-SubCell"/>
</dbReference>
<dbReference type="GO" id="GO:0005524">
    <property type="term" value="F:ATP binding"/>
    <property type="evidence" value="ECO:0007669"/>
    <property type="project" value="UniProtKB-KW"/>
</dbReference>
<dbReference type="GO" id="GO:0004595">
    <property type="term" value="F:pantetheine-phosphate adenylyltransferase activity"/>
    <property type="evidence" value="ECO:0007669"/>
    <property type="project" value="UniProtKB-UniRule"/>
</dbReference>
<dbReference type="GO" id="GO:0015937">
    <property type="term" value="P:coenzyme A biosynthetic process"/>
    <property type="evidence" value="ECO:0007669"/>
    <property type="project" value="UniProtKB-UniRule"/>
</dbReference>
<dbReference type="CDD" id="cd02163">
    <property type="entry name" value="PPAT"/>
    <property type="match status" value="1"/>
</dbReference>
<dbReference type="Gene3D" id="3.40.50.620">
    <property type="entry name" value="HUPs"/>
    <property type="match status" value="1"/>
</dbReference>
<dbReference type="HAMAP" id="MF_00151">
    <property type="entry name" value="PPAT_bact"/>
    <property type="match status" value="1"/>
</dbReference>
<dbReference type="InterPro" id="IPR004821">
    <property type="entry name" value="Cyt_trans-like"/>
</dbReference>
<dbReference type="InterPro" id="IPR001980">
    <property type="entry name" value="PPAT"/>
</dbReference>
<dbReference type="InterPro" id="IPR014729">
    <property type="entry name" value="Rossmann-like_a/b/a_fold"/>
</dbReference>
<dbReference type="NCBIfam" id="TIGR01510">
    <property type="entry name" value="coaD_prev_kdtB"/>
    <property type="match status" value="1"/>
</dbReference>
<dbReference type="NCBIfam" id="TIGR00125">
    <property type="entry name" value="cyt_tran_rel"/>
    <property type="match status" value="1"/>
</dbReference>
<dbReference type="PANTHER" id="PTHR21342">
    <property type="entry name" value="PHOSPHOPANTETHEINE ADENYLYLTRANSFERASE"/>
    <property type="match status" value="1"/>
</dbReference>
<dbReference type="PANTHER" id="PTHR21342:SF1">
    <property type="entry name" value="PHOSPHOPANTETHEINE ADENYLYLTRANSFERASE"/>
    <property type="match status" value="1"/>
</dbReference>
<dbReference type="Pfam" id="PF01467">
    <property type="entry name" value="CTP_transf_like"/>
    <property type="match status" value="1"/>
</dbReference>
<dbReference type="PRINTS" id="PR01020">
    <property type="entry name" value="LPSBIOSNTHSS"/>
</dbReference>
<dbReference type="SUPFAM" id="SSF52374">
    <property type="entry name" value="Nucleotidylyl transferase"/>
    <property type="match status" value="1"/>
</dbReference>
<keyword id="KW-0067">ATP-binding</keyword>
<keyword id="KW-0173">Coenzyme A biosynthesis</keyword>
<keyword id="KW-0963">Cytoplasm</keyword>
<keyword id="KW-0460">Magnesium</keyword>
<keyword id="KW-0547">Nucleotide-binding</keyword>
<keyword id="KW-0548">Nucleotidyltransferase</keyword>
<keyword id="KW-1185">Reference proteome</keyword>
<keyword id="KW-0808">Transferase</keyword>
<reference key="1">
    <citation type="journal article" date="2006" name="Nat. Biotechnol.">
        <title>Complete genome of the mutualistic, N2-fixing grass endophyte Azoarcus sp. strain BH72.</title>
        <authorList>
            <person name="Krause A."/>
            <person name="Ramakumar A."/>
            <person name="Bartels D."/>
            <person name="Battistoni F."/>
            <person name="Bekel T."/>
            <person name="Boch J."/>
            <person name="Boehm M."/>
            <person name="Friedrich F."/>
            <person name="Hurek T."/>
            <person name="Krause L."/>
            <person name="Linke B."/>
            <person name="McHardy A.C."/>
            <person name="Sarkar A."/>
            <person name="Schneiker S."/>
            <person name="Syed A.A."/>
            <person name="Thauer R."/>
            <person name="Vorhoelter F.-J."/>
            <person name="Weidner S."/>
            <person name="Puehler A."/>
            <person name="Reinhold-Hurek B."/>
            <person name="Kaiser O."/>
            <person name="Goesmann A."/>
        </authorList>
    </citation>
    <scope>NUCLEOTIDE SEQUENCE [LARGE SCALE GENOMIC DNA]</scope>
    <source>
        <strain>BH72</strain>
    </source>
</reference>
<proteinExistence type="inferred from homology"/>
<gene>
    <name evidence="1" type="primary">coaD</name>
    <name type="ordered locus">azo0762</name>
</gene>
<accession>A1K3H4</accession>